<name>NR4A2_XENTR</name>
<keyword id="KW-0963">Cytoplasm</keyword>
<keyword id="KW-0238">DNA-binding</keyword>
<keyword id="KW-0479">Metal-binding</keyword>
<keyword id="KW-0539">Nucleus</keyword>
<keyword id="KW-0675">Receptor</keyword>
<keyword id="KW-1185">Reference proteome</keyword>
<keyword id="KW-0804">Transcription</keyword>
<keyword id="KW-0805">Transcription regulation</keyword>
<keyword id="KW-0862">Zinc</keyword>
<keyword id="KW-0863">Zinc-finger</keyword>
<dbReference type="EMBL" id="BC136009">
    <property type="protein sequence ID" value="AAI36010.1"/>
    <property type="molecule type" value="mRNA"/>
</dbReference>
<dbReference type="RefSeq" id="NP_001093678.1">
    <property type="nucleotide sequence ID" value="NM_001100208.1"/>
</dbReference>
<dbReference type="SMR" id="A4IIG7"/>
<dbReference type="FunCoup" id="A4IIG7">
    <property type="interactions" value="900"/>
</dbReference>
<dbReference type="STRING" id="8364.ENSXETP00000010149"/>
<dbReference type="PaxDb" id="8364-ENSXETP00000011580"/>
<dbReference type="DNASU" id="100101682"/>
<dbReference type="GeneID" id="100101682"/>
<dbReference type="KEGG" id="xtr:100101682"/>
<dbReference type="AGR" id="Xenbase:XB-GENE-480893"/>
<dbReference type="CTD" id="4929"/>
<dbReference type="Xenbase" id="XB-GENE-480893">
    <property type="gene designation" value="nr4a2"/>
</dbReference>
<dbReference type="eggNOG" id="KOG4217">
    <property type="taxonomic scope" value="Eukaryota"/>
</dbReference>
<dbReference type="HOGENOM" id="CLU_007368_14_2_1"/>
<dbReference type="InParanoid" id="A4IIG7"/>
<dbReference type="OMA" id="EDIPMHN"/>
<dbReference type="OrthoDB" id="5952118at2759"/>
<dbReference type="PhylomeDB" id="A4IIG7"/>
<dbReference type="TreeFam" id="TF315430"/>
<dbReference type="Reactome" id="R-XTR-383280">
    <property type="pathway name" value="Nuclear Receptor transcription pathway"/>
</dbReference>
<dbReference type="Proteomes" id="UP000008143">
    <property type="component" value="Chromosome 9"/>
</dbReference>
<dbReference type="Bgee" id="ENSXETG00000031753">
    <property type="expression patterns" value="Expressed in brain and 10 other cell types or tissues"/>
</dbReference>
<dbReference type="GO" id="GO:0005737">
    <property type="term" value="C:cytoplasm"/>
    <property type="evidence" value="ECO:0007669"/>
    <property type="project" value="UniProtKB-SubCell"/>
</dbReference>
<dbReference type="GO" id="GO:0005634">
    <property type="term" value="C:nucleus"/>
    <property type="evidence" value="ECO:0007669"/>
    <property type="project" value="UniProtKB-SubCell"/>
</dbReference>
<dbReference type="GO" id="GO:0004879">
    <property type="term" value="F:nuclear receptor activity"/>
    <property type="evidence" value="ECO:0007669"/>
    <property type="project" value="InterPro"/>
</dbReference>
<dbReference type="GO" id="GO:0043565">
    <property type="term" value="F:sequence-specific DNA binding"/>
    <property type="evidence" value="ECO:0007669"/>
    <property type="project" value="InterPro"/>
</dbReference>
<dbReference type="GO" id="GO:0008270">
    <property type="term" value="F:zinc ion binding"/>
    <property type="evidence" value="ECO:0007669"/>
    <property type="project" value="UniProtKB-KW"/>
</dbReference>
<dbReference type="CDD" id="cd06969">
    <property type="entry name" value="NR_DBD_NGFI-B"/>
    <property type="match status" value="1"/>
</dbReference>
<dbReference type="FunFam" id="1.10.565.10:FF:000008">
    <property type="entry name" value="Nuclear receptor subfamily 4 group A member 1"/>
    <property type="match status" value="1"/>
</dbReference>
<dbReference type="FunFam" id="3.30.50.10:FF:000009">
    <property type="entry name" value="nuclear receptor subfamily 4 group A member 2"/>
    <property type="match status" value="1"/>
</dbReference>
<dbReference type="Gene3D" id="3.30.50.10">
    <property type="entry name" value="Erythroid Transcription Factor GATA-1, subunit A"/>
    <property type="match status" value="1"/>
</dbReference>
<dbReference type="Gene3D" id="1.10.565.10">
    <property type="entry name" value="Retinoid X Receptor"/>
    <property type="match status" value="1"/>
</dbReference>
<dbReference type="InterPro" id="IPR035500">
    <property type="entry name" value="NHR-like_dom_sf"/>
</dbReference>
<dbReference type="InterPro" id="IPR003070">
    <property type="entry name" value="NR4A1-3"/>
</dbReference>
<dbReference type="InterPro" id="IPR003073">
    <property type="entry name" value="NR4A2"/>
</dbReference>
<dbReference type="InterPro" id="IPR000536">
    <property type="entry name" value="Nucl_hrmn_rcpt_lig-bd"/>
</dbReference>
<dbReference type="InterPro" id="IPR001723">
    <property type="entry name" value="Nuclear_hrmn_rcpt"/>
</dbReference>
<dbReference type="InterPro" id="IPR001628">
    <property type="entry name" value="Znf_hrmn_rcpt"/>
</dbReference>
<dbReference type="InterPro" id="IPR013088">
    <property type="entry name" value="Znf_NHR/GATA"/>
</dbReference>
<dbReference type="PANTHER" id="PTHR24085">
    <property type="entry name" value="NUCLEAR HORMONE RECEPTOR"/>
    <property type="match status" value="1"/>
</dbReference>
<dbReference type="PANTHER" id="PTHR24085:SF0">
    <property type="entry name" value="NUCLEAR RECEPTOR SUBFAMILY 4 GROUP A MEMBER 2"/>
    <property type="match status" value="1"/>
</dbReference>
<dbReference type="Pfam" id="PF00104">
    <property type="entry name" value="Hormone_recep"/>
    <property type="match status" value="1"/>
</dbReference>
<dbReference type="Pfam" id="PF00105">
    <property type="entry name" value="zf-C4"/>
    <property type="match status" value="1"/>
</dbReference>
<dbReference type="PRINTS" id="PR01284">
    <property type="entry name" value="NUCLEARECPTR"/>
</dbReference>
<dbReference type="PRINTS" id="PR01287">
    <property type="entry name" value="NURRNUCRCPTR"/>
</dbReference>
<dbReference type="PRINTS" id="PR00398">
    <property type="entry name" value="STRDHORMONER"/>
</dbReference>
<dbReference type="PRINTS" id="PR00047">
    <property type="entry name" value="STROIDFINGER"/>
</dbReference>
<dbReference type="SMART" id="SM00430">
    <property type="entry name" value="HOLI"/>
    <property type="match status" value="1"/>
</dbReference>
<dbReference type="SMART" id="SM00399">
    <property type="entry name" value="ZnF_C4"/>
    <property type="match status" value="1"/>
</dbReference>
<dbReference type="SUPFAM" id="SSF57716">
    <property type="entry name" value="Glucocorticoid receptor-like (DNA-binding domain)"/>
    <property type="match status" value="1"/>
</dbReference>
<dbReference type="SUPFAM" id="SSF48508">
    <property type="entry name" value="Nuclear receptor ligand-binding domain"/>
    <property type="match status" value="1"/>
</dbReference>
<dbReference type="PROSITE" id="PS51843">
    <property type="entry name" value="NR_LBD"/>
    <property type="match status" value="1"/>
</dbReference>
<dbReference type="PROSITE" id="PS00031">
    <property type="entry name" value="NUCLEAR_REC_DBD_1"/>
    <property type="match status" value="1"/>
</dbReference>
<dbReference type="PROSITE" id="PS51030">
    <property type="entry name" value="NUCLEAR_REC_DBD_2"/>
    <property type="match status" value="1"/>
</dbReference>
<sequence length="591" mass="65681">MPCVQAQYGSSPQGASPASQSYTYHSSGEYSSDFLTPEFVKFSMDLTNTEITATTSLPSFSTFMDNYNTSYDVKPPCLYQMPLSGQQSSVKVEDIQMHGYQQHGHLPPQSEEMMSHSGSVYYKPSSPPTSSTPGFPVQHSPMWDNHGSLHSFNQNYVATRGGHVPRLSLFSFKQSPPGTPVSSCQMRFDGHHVSMNPETSGAHHVIDGQTFAVPNPIRKQASMGFPGLQLGHASQLIDSQVPSPPSRGSPSNEGLCAVCGDNAACQHYGVRTCEGCKGFFKRTVQKNAKYVCLANKNCPVDKRRRNRCQYCRFQKCLVVGMVKEVVRTDSLKGRRGRLPSKPKSPQEPSPPSPPVSLISALVRAHVDSNPAVSSLDYSRFQANPEYQMNGDDTQHIQQFYDLLTGSMEIIRGWAEKIPGFSELHKQDQDLLFESAFLELFVLRLAYRSNPAEGKLIFCNGVVLNRLQCVRGFGEWIDSIVDFSSNLHSMNIDISAFSCIAALAVITERHGLKEPKRVEELQNKIVNCLKDHVTFNNGGLNRPNYLSKLLGKLPELRTLCTQGLQRIFYLKLEDLVPPPAIIDKLFLDTLPF</sequence>
<gene>
    <name type="primary">nr4a2</name>
</gene>
<comment type="function">
    <text evidence="3">Transcriptional regulator which may play a role in the differentiation and maintenance of meso-diencephalic dopaminergic (mdDA) neurons.</text>
</comment>
<comment type="subcellular location">
    <subcellularLocation>
        <location evidence="2">Cytoplasm</location>
    </subcellularLocation>
    <subcellularLocation>
        <location evidence="2">Nucleus</location>
    </subcellularLocation>
</comment>
<comment type="similarity">
    <text evidence="7">Belongs to the nuclear hormone receptor family.</text>
</comment>
<organism>
    <name type="scientific">Xenopus tropicalis</name>
    <name type="common">Western clawed frog</name>
    <name type="synonym">Silurana tropicalis</name>
    <dbReference type="NCBI Taxonomy" id="8364"/>
    <lineage>
        <taxon>Eukaryota</taxon>
        <taxon>Metazoa</taxon>
        <taxon>Chordata</taxon>
        <taxon>Craniata</taxon>
        <taxon>Vertebrata</taxon>
        <taxon>Euteleostomi</taxon>
        <taxon>Amphibia</taxon>
        <taxon>Batrachia</taxon>
        <taxon>Anura</taxon>
        <taxon>Pipoidea</taxon>
        <taxon>Pipidae</taxon>
        <taxon>Xenopodinae</taxon>
        <taxon>Xenopus</taxon>
        <taxon>Silurana</taxon>
    </lineage>
</organism>
<accession>A4IIG7</accession>
<evidence type="ECO:0000250" key="1"/>
<evidence type="ECO:0000250" key="2">
    <source>
        <dbReference type="UniProtKB" id="P43354"/>
    </source>
</evidence>
<evidence type="ECO:0000250" key="3">
    <source>
        <dbReference type="UniProtKB" id="Q06219"/>
    </source>
</evidence>
<evidence type="ECO:0000255" key="4">
    <source>
        <dbReference type="PROSITE-ProRule" id="PRU00407"/>
    </source>
</evidence>
<evidence type="ECO:0000255" key="5">
    <source>
        <dbReference type="PROSITE-ProRule" id="PRU01189"/>
    </source>
</evidence>
<evidence type="ECO:0000256" key="6">
    <source>
        <dbReference type="SAM" id="MobiDB-lite"/>
    </source>
</evidence>
<evidence type="ECO:0000305" key="7"/>
<feature type="chain" id="PRO_0000326153" description="Nuclear receptor subfamily 4 group A member 2">
    <location>
        <begin position="1"/>
        <end position="591"/>
    </location>
</feature>
<feature type="domain" description="NR LBD" evidence="5">
    <location>
        <begin position="353"/>
        <end position="588"/>
    </location>
</feature>
<feature type="DNA-binding region" description="Nuclear receptor" evidence="4">
    <location>
        <begin position="253"/>
        <end position="328"/>
    </location>
</feature>
<feature type="zinc finger region" description="NR C4-type" evidence="4">
    <location>
        <begin position="256"/>
        <end position="276"/>
    </location>
</feature>
<feature type="zinc finger region" description="NR C4-type" evidence="4">
    <location>
        <begin position="292"/>
        <end position="311"/>
    </location>
</feature>
<feature type="region of interest" description="Disordered" evidence="6">
    <location>
        <begin position="1"/>
        <end position="22"/>
    </location>
</feature>
<feature type="region of interest" description="Disordered" evidence="6">
    <location>
        <begin position="110"/>
        <end position="133"/>
    </location>
</feature>
<feature type="region of interest" description="Disordered" evidence="6">
    <location>
        <begin position="330"/>
        <end position="354"/>
    </location>
</feature>
<feature type="short sequence motif" description="Bipartite nuclear localization signal (NLS1)" evidence="1">
    <location>
        <begin position="280"/>
        <end position="307"/>
    </location>
</feature>
<feature type="short sequence motif" description="Nuclear localization signal (NLS1)" evidence="1">
    <location>
        <begin position="331"/>
        <end position="343"/>
    </location>
</feature>
<feature type="short sequence motif" description="nuclear export sequence (NES1)" evidence="1">
    <location>
        <begin position="436"/>
        <end position="445"/>
    </location>
</feature>
<feature type="short sequence motif" description="nuclear export sequence (NES2)" evidence="1">
    <location>
        <begin position="561"/>
        <end position="570"/>
    </location>
</feature>
<feature type="compositionally biased region" description="Low complexity" evidence="6">
    <location>
        <begin position="8"/>
        <end position="22"/>
    </location>
</feature>
<feature type="compositionally biased region" description="Pro residues" evidence="6">
    <location>
        <begin position="345"/>
        <end position="354"/>
    </location>
</feature>
<protein>
    <recommendedName>
        <fullName>Nuclear receptor subfamily 4 group A member 2</fullName>
    </recommendedName>
</protein>
<reference key="1">
    <citation type="submission" date="2007-03" db="EMBL/GenBank/DDBJ databases">
        <authorList>
            <consortium name="NIH - Xenopus Gene Collection (XGC) project"/>
        </authorList>
    </citation>
    <scope>NUCLEOTIDE SEQUENCE [LARGE SCALE MRNA]</scope>
    <source>
        <tissue>Brain</tissue>
    </source>
</reference>
<proteinExistence type="evidence at transcript level"/>